<gene>
    <name evidence="1" type="primary">ruvB</name>
    <name type="ordered locus">Mpe_A0327</name>
</gene>
<dbReference type="EC" id="3.6.4.-" evidence="1"/>
<dbReference type="EMBL" id="CP000555">
    <property type="protein sequence ID" value="ABM93289.1"/>
    <property type="molecule type" value="Genomic_DNA"/>
</dbReference>
<dbReference type="RefSeq" id="WP_011827928.1">
    <property type="nucleotide sequence ID" value="NC_008825.1"/>
</dbReference>
<dbReference type="SMR" id="A2SCK0"/>
<dbReference type="STRING" id="420662.Mpe_A0327"/>
<dbReference type="KEGG" id="mpt:Mpe_A0327"/>
<dbReference type="eggNOG" id="COG2255">
    <property type="taxonomic scope" value="Bacteria"/>
</dbReference>
<dbReference type="HOGENOM" id="CLU_055599_1_0_4"/>
<dbReference type="Proteomes" id="UP000000366">
    <property type="component" value="Chromosome"/>
</dbReference>
<dbReference type="GO" id="GO:0005737">
    <property type="term" value="C:cytoplasm"/>
    <property type="evidence" value="ECO:0007669"/>
    <property type="project" value="UniProtKB-SubCell"/>
</dbReference>
<dbReference type="GO" id="GO:0048476">
    <property type="term" value="C:Holliday junction resolvase complex"/>
    <property type="evidence" value="ECO:0007669"/>
    <property type="project" value="UniProtKB-UniRule"/>
</dbReference>
<dbReference type="GO" id="GO:0005524">
    <property type="term" value="F:ATP binding"/>
    <property type="evidence" value="ECO:0007669"/>
    <property type="project" value="UniProtKB-UniRule"/>
</dbReference>
<dbReference type="GO" id="GO:0016887">
    <property type="term" value="F:ATP hydrolysis activity"/>
    <property type="evidence" value="ECO:0007669"/>
    <property type="project" value="InterPro"/>
</dbReference>
<dbReference type="GO" id="GO:0000400">
    <property type="term" value="F:four-way junction DNA binding"/>
    <property type="evidence" value="ECO:0007669"/>
    <property type="project" value="UniProtKB-UniRule"/>
</dbReference>
<dbReference type="GO" id="GO:0009378">
    <property type="term" value="F:four-way junction helicase activity"/>
    <property type="evidence" value="ECO:0007669"/>
    <property type="project" value="InterPro"/>
</dbReference>
<dbReference type="GO" id="GO:0006310">
    <property type="term" value="P:DNA recombination"/>
    <property type="evidence" value="ECO:0007669"/>
    <property type="project" value="UniProtKB-UniRule"/>
</dbReference>
<dbReference type="GO" id="GO:0006281">
    <property type="term" value="P:DNA repair"/>
    <property type="evidence" value="ECO:0007669"/>
    <property type="project" value="UniProtKB-UniRule"/>
</dbReference>
<dbReference type="CDD" id="cd00009">
    <property type="entry name" value="AAA"/>
    <property type="match status" value="1"/>
</dbReference>
<dbReference type="FunFam" id="1.10.10.10:FF:000086">
    <property type="entry name" value="Holliday junction ATP-dependent DNA helicase RuvB"/>
    <property type="match status" value="1"/>
</dbReference>
<dbReference type="FunFam" id="3.40.50.300:FF:000073">
    <property type="entry name" value="Holliday junction ATP-dependent DNA helicase RuvB"/>
    <property type="match status" value="1"/>
</dbReference>
<dbReference type="Gene3D" id="1.10.8.60">
    <property type="match status" value="1"/>
</dbReference>
<dbReference type="Gene3D" id="3.40.50.300">
    <property type="entry name" value="P-loop containing nucleotide triphosphate hydrolases"/>
    <property type="match status" value="1"/>
</dbReference>
<dbReference type="Gene3D" id="1.10.10.10">
    <property type="entry name" value="Winged helix-like DNA-binding domain superfamily/Winged helix DNA-binding domain"/>
    <property type="match status" value="1"/>
</dbReference>
<dbReference type="HAMAP" id="MF_00016">
    <property type="entry name" value="DNA_HJ_migration_RuvB"/>
    <property type="match status" value="1"/>
</dbReference>
<dbReference type="InterPro" id="IPR003593">
    <property type="entry name" value="AAA+_ATPase"/>
</dbReference>
<dbReference type="InterPro" id="IPR041445">
    <property type="entry name" value="AAA_lid_4"/>
</dbReference>
<dbReference type="InterPro" id="IPR004605">
    <property type="entry name" value="DNA_helicase_Holl-junc_RuvB"/>
</dbReference>
<dbReference type="InterPro" id="IPR027417">
    <property type="entry name" value="P-loop_NTPase"/>
</dbReference>
<dbReference type="InterPro" id="IPR008824">
    <property type="entry name" value="RuvB-like_N"/>
</dbReference>
<dbReference type="InterPro" id="IPR008823">
    <property type="entry name" value="RuvB_C"/>
</dbReference>
<dbReference type="InterPro" id="IPR036388">
    <property type="entry name" value="WH-like_DNA-bd_sf"/>
</dbReference>
<dbReference type="InterPro" id="IPR036390">
    <property type="entry name" value="WH_DNA-bd_sf"/>
</dbReference>
<dbReference type="NCBIfam" id="NF000868">
    <property type="entry name" value="PRK00080.1"/>
    <property type="match status" value="1"/>
</dbReference>
<dbReference type="NCBIfam" id="TIGR00635">
    <property type="entry name" value="ruvB"/>
    <property type="match status" value="1"/>
</dbReference>
<dbReference type="PANTHER" id="PTHR42848">
    <property type="match status" value="1"/>
</dbReference>
<dbReference type="PANTHER" id="PTHR42848:SF1">
    <property type="entry name" value="HOLLIDAY JUNCTION BRANCH MIGRATION COMPLEX SUBUNIT RUVB"/>
    <property type="match status" value="1"/>
</dbReference>
<dbReference type="Pfam" id="PF17864">
    <property type="entry name" value="AAA_lid_4"/>
    <property type="match status" value="1"/>
</dbReference>
<dbReference type="Pfam" id="PF05491">
    <property type="entry name" value="RuvB_C"/>
    <property type="match status" value="1"/>
</dbReference>
<dbReference type="Pfam" id="PF05496">
    <property type="entry name" value="RuvB_N"/>
    <property type="match status" value="1"/>
</dbReference>
<dbReference type="SMART" id="SM00382">
    <property type="entry name" value="AAA"/>
    <property type="match status" value="1"/>
</dbReference>
<dbReference type="SUPFAM" id="SSF52540">
    <property type="entry name" value="P-loop containing nucleoside triphosphate hydrolases"/>
    <property type="match status" value="1"/>
</dbReference>
<dbReference type="SUPFAM" id="SSF46785">
    <property type="entry name" value="Winged helix' DNA-binding domain"/>
    <property type="match status" value="1"/>
</dbReference>
<comment type="function">
    <text evidence="1">The RuvA-RuvB-RuvC complex processes Holliday junction (HJ) DNA during genetic recombination and DNA repair, while the RuvA-RuvB complex plays an important role in the rescue of blocked DNA replication forks via replication fork reversal (RFR). RuvA specifically binds to HJ cruciform DNA, conferring on it an open structure. The RuvB hexamer acts as an ATP-dependent pump, pulling dsDNA into and through the RuvAB complex. RuvB forms 2 homohexamers on either side of HJ DNA bound by 1 or 2 RuvA tetramers; 4 subunits per hexamer contact DNA at a time. Coordinated motions by a converter formed by DNA-disengaged RuvB subunits stimulates ATP hydrolysis and nucleotide exchange. Immobilization of the converter enables RuvB to convert the ATP-contained energy into a lever motion, pulling 2 nucleotides of DNA out of the RuvA tetramer per ATP hydrolyzed, thus driving DNA branch migration. The RuvB motors rotate together with the DNA substrate, which together with the progressing nucleotide cycle form the mechanistic basis for DNA recombination by continuous HJ branch migration. Branch migration allows RuvC to scan DNA until it finds its consensus sequence, where it cleaves and resolves cruciform DNA.</text>
</comment>
<comment type="catalytic activity">
    <reaction evidence="1">
        <text>ATP + H2O = ADP + phosphate + H(+)</text>
        <dbReference type="Rhea" id="RHEA:13065"/>
        <dbReference type="ChEBI" id="CHEBI:15377"/>
        <dbReference type="ChEBI" id="CHEBI:15378"/>
        <dbReference type="ChEBI" id="CHEBI:30616"/>
        <dbReference type="ChEBI" id="CHEBI:43474"/>
        <dbReference type="ChEBI" id="CHEBI:456216"/>
    </reaction>
</comment>
<comment type="subunit">
    <text evidence="1">Homohexamer. Forms an RuvA(8)-RuvB(12)-Holliday junction (HJ) complex. HJ DNA is sandwiched between 2 RuvA tetramers; dsDNA enters through RuvA and exits via RuvB. An RuvB hexamer assembles on each DNA strand where it exits the tetramer. Each RuvB hexamer is contacted by two RuvA subunits (via domain III) on 2 adjacent RuvB subunits; this complex drives branch migration. In the full resolvosome a probable DNA-RuvA(4)-RuvB(12)-RuvC(2) complex forms which resolves the HJ.</text>
</comment>
<comment type="subcellular location">
    <subcellularLocation>
        <location evidence="1">Cytoplasm</location>
    </subcellularLocation>
</comment>
<comment type="domain">
    <text evidence="1">Has 3 domains, the large (RuvB-L) and small ATPase (RuvB-S) domains and the C-terminal head (RuvB-H) domain. The head domain binds DNA, while the ATPase domains jointly bind ATP, ADP or are empty depending on the state of the subunit in the translocation cycle. During a single DNA translocation step the structure of each domain remains the same, but their relative positions change.</text>
</comment>
<comment type="similarity">
    <text evidence="1">Belongs to the RuvB family.</text>
</comment>
<feature type="chain" id="PRO_0000322814" description="Holliday junction branch migration complex subunit RuvB">
    <location>
        <begin position="1"/>
        <end position="355"/>
    </location>
</feature>
<feature type="region of interest" description="Disordered" evidence="2">
    <location>
        <begin position="1"/>
        <end position="26"/>
    </location>
</feature>
<feature type="region of interest" description="Large ATPase domain (RuvB-L)" evidence="1">
    <location>
        <begin position="5"/>
        <end position="196"/>
    </location>
</feature>
<feature type="region of interest" description="Small ATPAse domain (RuvB-S)" evidence="1">
    <location>
        <begin position="197"/>
        <end position="267"/>
    </location>
</feature>
<feature type="region of interest" description="Head domain (RuvB-H)" evidence="1">
    <location>
        <begin position="270"/>
        <end position="355"/>
    </location>
</feature>
<feature type="compositionally biased region" description="Low complexity" evidence="2">
    <location>
        <begin position="9"/>
        <end position="22"/>
    </location>
</feature>
<feature type="binding site" evidence="1">
    <location>
        <position position="35"/>
    </location>
    <ligand>
        <name>ATP</name>
        <dbReference type="ChEBI" id="CHEBI:30616"/>
    </ligand>
</feature>
<feature type="binding site" evidence="1">
    <location>
        <position position="36"/>
    </location>
    <ligand>
        <name>ATP</name>
        <dbReference type="ChEBI" id="CHEBI:30616"/>
    </ligand>
</feature>
<feature type="binding site" evidence="1">
    <location>
        <position position="77"/>
    </location>
    <ligand>
        <name>ATP</name>
        <dbReference type="ChEBI" id="CHEBI:30616"/>
    </ligand>
</feature>
<feature type="binding site" evidence="1">
    <location>
        <position position="80"/>
    </location>
    <ligand>
        <name>ATP</name>
        <dbReference type="ChEBI" id="CHEBI:30616"/>
    </ligand>
</feature>
<feature type="binding site" evidence="1">
    <location>
        <position position="81"/>
    </location>
    <ligand>
        <name>ATP</name>
        <dbReference type="ChEBI" id="CHEBI:30616"/>
    </ligand>
</feature>
<feature type="binding site" evidence="1">
    <location>
        <position position="81"/>
    </location>
    <ligand>
        <name>Mg(2+)</name>
        <dbReference type="ChEBI" id="CHEBI:18420"/>
    </ligand>
</feature>
<feature type="binding site" evidence="1">
    <location>
        <position position="82"/>
    </location>
    <ligand>
        <name>ATP</name>
        <dbReference type="ChEBI" id="CHEBI:30616"/>
    </ligand>
</feature>
<feature type="binding site" evidence="1">
    <location>
        <begin position="143"/>
        <end position="145"/>
    </location>
    <ligand>
        <name>ATP</name>
        <dbReference type="ChEBI" id="CHEBI:30616"/>
    </ligand>
</feature>
<feature type="binding site" evidence="1">
    <location>
        <position position="186"/>
    </location>
    <ligand>
        <name>ATP</name>
        <dbReference type="ChEBI" id="CHEBI:30616"/>
    </ligand>
</feature>
<feature type="binding site" evidence="1">
    <location>
        <position position="196"/>
    </location>
    <ligand>
        <name>ATP</name>
        <dbReference type="ChEBI" id="CHEBI:30616"/>
    </ligand>
</feature>
<feature type="binding site" evidence="1">
    <location>
        <position position="233"/>
    </location>
    <ligand>
        <name>ATP</name>
        <dbReference type="ChEBI" id="CHEBI:30616"/>
    </ligand>
</feature>
<feature type="binding site" evidence="1">
    <location>
        <position position="325"/>
    </location>
    <ligand>
        <name>DNA</name>
        <dbReference type="ChEBI" id="CHEBI:16991"/>
    </ligand>
</feature>
<feature type="binding site" evidence="1">
    <location>
        <position position="330"/>
    </location>
    <ligand>
        <name>DNA</name>
        <dbReference type="ChEBI" id="CHEBI:16991"/>
    </ligand>
</feature>
<keyword id="KW-0067">ATP-binding</keyword>
<keyword id="KW-0963">Cytoplasm</keyword>
<keyword id="KW-0227">DNA damage</keyword>
<keyword id="KW-0233">DNA recombination</keyword>
<keyword id="KW-0234">DNA repair</keyword>
<keyword id="KW-0238">DNA-binding</keyword>
<keyword id="KW-0378">Hydrolase</keyword>
<keyword id="KW-0547">Nucleotide-binding</keyword>
<keyword id="KW-1185">Reference proteome</keyword>
<accession>A2SCK0</accession>
<proteinExistence type="inferred from homology"/>
<reference key="1">
    <citation type="journal article" date="2007" name="J. Bacteriol.">
        <title>Whole-genome analysis of the methyl tert-butyl ether-degrading beta-proteobacterium Methylibium petroleiphilum PM1.</title>
        <authorList>
            <person name="Kane S.R."/>
            <person name="Chakicherla A.Y."/>
            <person name="Chain P.S.G."/>
            <person name="Schmidt R."/>
            <person name="Shin M.W."/>
            <person name="Legler T.C."/>
            <person name="Scow K.M."/>
            <person name="Larimer F.W."/>
            <person name="Lucas S.M."/>
            <person name="Richardson P.M."/>
            <person name="Hristova K.R."/>
        </authorList>
    </citation>
    <scope>NUCLEOTIDE SEQUENCE [LARGE SCALE GENOMIC DNA]</scope>
    <source>
        <strain>ATCC BAA-1232 / LMG 22953 / PM1</strain>
    </source>
</reference>
<evidence type="ECO:0000255" key="1">
    <source>
        <dbReference type="HAMAP-Rule" id="MF_00016"/>
    </source>
</evidence>
<evidence type="ECO:0000256" key="2">
    <source>
        <dbReference type="SAM" id="MobiDB-lite"/>
    </source>
</evidence>
<protein>
    <recommendedName>
        <fullName evidence="1">Holliday junction branch migration complex subunit RuvB</fullName>
        <ecNumber evidence="1">3.6.4.-</ecNumber>
    </recommendedName>
</protein>
<sequence length="355" mass="38514">MSIQTDDFASSSPAARRVVSTAPASPNEEAIERALRPKGLADYVGQAKAREQLEIFIGAARKRSEALDHVLLFGPPGLGKTTLSHIIAAELGVNLRQTSGPVLEKPKDLAAILTNLERNDVLFIDEIHRLSPVVEEILYPALEDYQIDIMIGEGPAARSIKLELQPFTLIGATTRAGMLTNPLRDRFGIVARLEFYSVEELARIVTRSAGLLQVPTDTAGGLEIAKRSRGTPRIANRLLRRVRDYAQVKGDGRIDAAIADKALAMLDVDPQGFDVMDRKLLEAVIHRFDGGPVGLDNVAAAIGEESGTIEDVIEPYLIQQGYLQRTPRGRIATAAAYRHLGVLPPTTSGSELFDA</sequence>
<name>RUVB_METPP</name>
<organism>
    <name type="scientific">Methylibium petroleiphilum (strain ATCC BAA-1232 / LMG 22953 / PM1)</name>
    <dbReference type="NCBI Taxonomy" id="420662"/>
    <lineage>
        <taxon>Bacteria</taxon>
        <taxon>Pseudomonadati</taxon>
        <taxon>Pseudomonadota</taxon>
        <taxon>Betaproteobacteria</taxon>
        <taxon>Burkholderiales</taxon>
        <taxon>Sphaerotilaceae</taxon>
        <taxon>Methylibium</taxon>
    </lineage>
</organism>